<gene>
    <name evidence="1" type="primary">atpB</name>
    <name type="ordered locus">Shew185_4371</name>
</gene>
<comment type="function">
    <text evidence="1">Key component of the proton channel; it plays a direct role in the translocation of protons across the membrane.</text>
</comment>
<comment type="subunit">
    <text evidence="1">F-type ATPases have 2 components, CF(1) - the catalytic core - and CF(0) - the membrane proton channel. CF(1) has five subunits: alpha(3), beta(3), gamma(1), delta(1), epsilon(1). CF(0) has three main subunits: a(1), b(2) and c(9-12). The alpha and beta chains form an alternating ring which encloses part of the gamma chain. CF(1) is attached to CF(0) by a central stalk formed by the gamma and epsilon chains, while a peripheral stalk is formed by the delta and b chains.</text>
</comment>
<comment type="subcellular location">
    <subcellularLocation>
        <location evidence="1">Cell inner membrane</location>
        <topology evidence="1">Multi-pass membrane protein</topology>
    </subcellularLocation>
</comment>
<comment type="similarity">
    <text evidence="1">Belongs to the ATPase A chain family.</text>
</comment>
<evidence type="ECO:0000255" key="1">
    <source>
        <dbReference type="HAMAP-Rule" id="MF_01393"/>
    </source>
</evidence>
<feature type="chain" id="PRO_0000362449" description="ATP synthase subunit a">
    <location>
        <begin position="1"/>
        <end position="278"/>
    </location>
</feature>
<feature type="transmembrane region" description="Helical" evidence="1">
    <location>
        <begin position="43"/>
        <end position="63"/>
    </location>
</feature>
<feature type="transmembrane region" description="Helical" evidence="1">
    <location>
        <begin position="104"/>
        <end position="124"/>
    </location>
</feature>
<feature type="transmembrane region" description="Helical" evidence="1">
    <location>
        <begin position="148"/>
        <end position="168"/>
    </location>
</feature>
<feature type="transmembrane region" description="Helical" evidence="1">
    <location>
        <begin position="191"/>
        <end position="211"/>
    </location>
</feature>
<feature type="transmembrane region" description="Helical" evidence="1">
    <location>
        <begin position="222"/>
        <end position="242"/>
    </location>
</feature>
<feature type="transmembrane region" description="Helical" evidence="1">
    <location>
        <begin position="249"/>
        <end position="269"/>
    </location>
</feature>
<sequence>MAATGEALTPQGYIQHHLTNLQVCATDNGLAVNHACEKAGFWTWHIDSLFFSVGLGVLFLWIFRSVGKKATSGVPGKLQCFVEMIVEFVNNSVKESFHGRNALIAPLALTIFVWVFMMNFMDMIPVDWLPHAASLMGIPYLKAVPTTDVNITFSLAIGVFLLIIFYSIKVKGVSGFVKELTLQPFNHKAMIPVNLLLETVTLIAKPISLALRLFGNLYAGELIFILIALMYGTNLLLSTLGVTLQLGWLIFHILVITLQAFIFMMLTIVYLSMAHEDH</sequence>
<keyword id="KW-0066">ATP synthesis</keyword>
<keyword id="KW-0997">Cell inner membrane</keyword>
<keyword id="KW-1003">Cell membrane</keyword>
<keyword id="KW-0138">CF(0)</keyword>
<keyword id="KW-0375">Hydrogen ion transport</keyword>
<keyword id="KW-0406">Ion transport</keyword>
<keyword id="KW-0472">Membrane</keyword>
<keyword id="KW-0812">Transmembrane</keyword>
<keyword id="KW-1133">Transmembrane helix</keyword>
<keyword id="KW-0813">Transport</keyword>
<proteinExistence type="inferred from homology"/>
<dbReference type="EMBL" id="CP000753">
    <property type="protein sequence ID" value="ABS10485.1"/>
    <property type="molecule type" value="Genomic_DNA"/>
</dbReference>
<dbReference type="RefSeq" id="WP_012090673.1">
    <property type="nucleotide sequence ID" value="NC_009665.1"/>
</dbReference>
<dbReference type="SMR" id="A6WUJ6"/>
<dbReference type="KEGG" id="sbm:Shew185_4371"/>
<dbReference type="HOGENOM" id="CLU_041018_1_0_6"/>
<dbReference type="GO" id="GO:0005886">
    <property type="term" value="C:plasma membrane"/>
    <property type="evidence" value="ECO:0007669"/>
    <property type="project" value="UniProtKB-SubCell"/>
</dbReference>
<dbReference type="GO" id="GO:0045259">
    <property type="term" value="C:proton-transporting ATP synthase complex"/>
    <property type="evidence" value="ECO:0007669"/>
    <property type="project" value="UniProtKB-KW"/>
</dbReference>
<dbReference type="GO" id="GO:0046933">
    <property type="term" value="F:proton-transporting ATP synthase activity, rotational mechanism"/>
    <property type="evidence" value="ECO:0007669"/>
    <property type="project" value="UniProtKB-UniRule"/>
</dbReference>
<dbReference type="GO" id="GO:0042777">
    <property type="term" value="P:proton motive force-driven plasma membrane ATP synthesis"/>
    <property type="evidence" value="ECO:0007669"/>
    <property type="project" value="TreeGrafter"/>
</dbReference>
<dbReference type="CDD" id="cd00310">
    <property type="entry name" value="ATP-synt_Fo_a_6"/>
    <property type="match status" value="1"/>
</dbReference>
<dbReference type="FunFam" id="1.20.120.220:FF:000002">
    <property type="entry name" value="ATP synthase subunit a"/>
    <property type="match status" value="1"/>
</dbReference>
<dbReference type="Gene3D" id="1.20.120.220">
    <property type="entry name" value="ATP synthase, F0 complex, subunit A"/>
    <property type="match status" value="1"/>
</dbReference>
<dbReference type="HAMAP" id="MF_01393">
    <property type="entry name" value="ATP_synth_a_bact"/>
    <property type="match status" value="1"/>
</dbReference>
<dbReference type="InterPro" id="IPR045082">
    <property type="entry name" value="ATP_syn_F0_a_bact/chloroplast"/>
</dbReference>
<dbReference type="InterPro" id="IPR000568">
    <property type="entry name" value="ATP_synth_F0_asu"/>
</dbReference>
<dbReference type="InterPro" id="IPR023011">
    <property type="entry name" value="ATP_synth_F0_asu_AS"/>
</dbReference>
<dbReference type="InterPro" id="IPR035908">
    <property type="entry name" value="F0_ATP_A_sf"/>
</dbReference>
<dbReference type="NCBIfam" id="TIGR01131">
    <property type="entry name" value="ATP_synt_6_or_A"/>
    <property type="match status" value="1"/>
</dbReference>
<dbReference type="NCBIfam" id="NF004477">
    <property type="entry name" value="PRK05815.1-1"/>
    <property type="match status" value="1"/>
</dbReference>
<dbReference type="PANTHER" id="PTHR42823">
    <property type="entry name" value="ATP SYNTHASE SUBUNIT A, CHLOROPLASTIC"/>
    <property type="match status" value="1"/>
</dbReference>
<dbReference type="PANTHER" id="PTHR42823:SF3">
    <property type="entry name" value="ATP SYNTHASE SUBUNIT A, CHLOROPLASTIC"/>
    <property type="match status" value="1"/>
</dbReference>
<dbReference type="Pfam" id="PF00119">
    <property type="entry name" value="ATP-synt_A"/>
    <property type="match status" value="1"/>
</dbReference>
<dbReference type="PRINTS" id="PR00123">
    <property type="entry name" value="ATPASEA"/>
</dbReference>
<dbReference type="SUPFAM" id="SSF81336">
    <property type="entry name" value="F1F0 ATP synthase subunit A"/>
    <property type="match status" value="1"/>
</dbReference>
<dbReference type="PROSITE" id="PS00449">
    <property type="entry name" value="ATPASE_A"/>
    <property type="match status" value="1"/>
</dbReference>
<accession>A6WUJ6</accession>
<protein>
    <recommendedName>
        <fullName evidence="1">ATP synthase subunit a</fullName>
    </recommendedName>
    <alternativeName>
        <fullName evidence="1">ATP synthase F0 sector subunit a</fullName>
    </alternativeName>
    <alternativeName>
        <fullName evidence="1">F-ATPase subunit 6</fullName>
    </alternativeName>
</protein>
<reference key="1">
    <citation type="submission" date="2007-07" db="EMBL/GenBank/DDBJ databases">
        <title>Complete sequence of chromosome of Shewanella baltica OS185.</title>
        <authorList>
            <consortium name="US DOE Joint Genome Institute"/>
            <person name="Copeland A."/>
            <person name="Lucas S."/>
            <person name="Lapidus A."/>
            <person name="Barry K."/>
            <person name="Glavina del Rio T."/>
            <person name="Dalin E."/>
            <person name="Tice H."/>
            <person name="Pitluck S."/>
            <person name="Sims D."/>
            <person name="Brettin T."/>
            <person name="Bruce D."/>
            <person name="Detter J.C."/>
            <person name="Han C."/>
            <person name="Schmutz J."/>
            <person name="Larimer F."/>
            <person name="Land M."/>
            <person name="Hauser L."/>
            <person name="Kyrpides N."/>
            <person name="Mikhailova N."/>
            <person name="Brettar I."/>
            <person name="Rodrigues J."/>
            <person name="Konstantinidis K."/>
            <person name="Tiedje J."/>
            <person name="Richardson P."/>
        </authorList>
    </citation>
    <scope>NUCLEOTIDE SEQUENCE [LARGE SCALE GENOMIC DNA]</scope>
    <source>
        <strain>OS185</strain>
    </source>
</reference>
<name>ATP6_SHEB8</name>
<organism>
    <name type="scientific">Shewanella baltica (strain OS185)</name>
    <dbReference type="NCBI Taxonomy" id="402882"/>
    <lineage>
        <taxon>Bacteria</taxon>
        <taxon>Pseudomonadati</taxon>
        <taxon>Pseudomonadota</taxon>
        <taxon>Gammaproteobacteria</taxon>
        <taxon>Alteromonadales</taxon>
        <taxon>Shewanellaceae</taxon>
        <taxon>Shewanella</taxon>
    </lineage>
</organism>